<evidence type="ECO:0000255" key="1">
    <source>
        <dbReference type="HAMAP-Rule" id="MF_00382"/>
    </source>
</evidence>
<evidence type="ECO:0000305" key="2"/>
<accession>B2GKF3</accession>
<sequence length="128" mass="14742">MARVKRAVNAHKKRREVLEKASGYRGQRSRLYRKAKEQMLHSYTYSYNDRRKKKGDFRRLWIQRINAASRANGLTYNRFIQGLKAAEVEVDRRMLAELAVSDENAFAALVQVAKDALPEDTSAPRTAA</sequence>
<gene>
    <name evidence="1" type="primary">rplT</name>
    <name type="ordered locus">KRH_15650</name>
</gene>
<protein>
    <recommendedName>
        <fullName evidence="1">Large ribosomal subunit protein bL20</fullName>
    </recommendedName>
    <alternativeName>
        <fullName evidence="2">50S ribosomal protein L20</fullName>
    </alternativeName>
</protein>
<comment type="function">
    <text evidence="1">Binds directly to 23S ribosomal RNA and is necessary for the in vitro assembly process of the 50S ribosomal subunit. It is not involved in the protein synthesizing functions of that subunit.</text>
</comment>
<comment type="similarity">
    <text evidence="1">Belongs to the bacterial ribosomal protein bL20 family.</text>
</comment>
<name>RL20_KOCRD</name>
<reference key="1">
    <citation type="journal article" date="2008" name="J. Bacteriol.">
        <title>Complete genome sequence of the soil actinomycete Kocuria rhizophila.</title>
        <authorList>
            <person name="Takarada H."/>
            <person name="Sekine M."/>
            <person name="Kosugi H."/>
            <person name="Matsuo Y."/>
            <person name="Fujisawa T."/>
            <person name="Omata S."/>
            <person name="Kishi E."/>
            <person name="Shimizu A."/>
            <person name="Tsukatani N."/>
            <person name="Tanikawa S."/>
            <person name="Fujita N."/>
            <person name="Harayama S."/>
        </authorList>
    </citation>
    <scope>NUCLEOTIDE SEQUENCE [LARGE SCALE GENOMIC DNA]</scope>
    <source>
        <strain>ATCC 9341 / DSM 348 / NBRC 103217 / DC2201</strain>
    </source>
</reference>
<keyword id="KW-1185">Reference proteome</keyword>
<keyword id="KW-0687">Ribonucleoprotein</keyword>
<keyword id="KW-0689">Ribosomal protein</keyword>
<keyword id="KW-0694">RNA-binding</keyword>
<keyword id="KW-0699">rRNA-binding</keyword>
<organism>
    <name type="scientific">Kocuria rhizophila (strain ATCC 9341 / DSM 348 / NBRC 103217 / DC2201)</name>
    <dbReference type="NCBI Taxonomy" id="378753"/>
    <lineage>
        <taxon>Bacteria</taxon>
        <taxon>Bacillati</taxon>
        <taxon>Actinomycetota</taxon>
        <taxon>Actinomycetes</taxon>
        <taxon>Micrococcales</taxon>
        <taxon>Micrococcaceae</taxon>
        <taxon>Kocuria</taxon>
    </lineage>
</organism>
<proteinExistence type="inferred from homology"/>
<feature type="chain" id="PRO_1000122329" description="Large ribosomal subunit protein bL20">
    <location>
        <begin position="1"/>
        <end position="128"/>
    </location>
</feature>
<dbReference type="EMBL" id="AP009152">
    <property type="protein sequence ID" value="BAG29912.1"/>
    <property type="molecule type" value="Genomic_DNA"/>
</dbReference>
<dbReference type="RefSeq" id="WP_012398633.1">
    <property type="nucleotide sequence ID" value="NC_010617.1"/>
</dbReference>
<dbReference type="SMR" id="B2GKF3"/>
<dbReference type="STRING" id="378753.KRH_15650"/>
<dbReference type="KEGG" id="krh:KRH_15650"/>
<dbReference type="eggNOG" id="COG0292">
    <property type="taxonomic scope" value="Bacteria"/>
</dbReference>
<dbReference type="HOGENOM" id="CLU_123265_0_0_11"/>
<dbReference type="OrthoDB" id="9808966at2"/>
<dbReference type="Proteomes" id="UP000008838">
    <property type="component" value="Chromosome"/>
</dbReference>
<dbReference type="GO" id="GO:1990904">
    <property type="term" value="C:ribonucleoprotein complex"/>
    <property type="evidence" value="ECO:0007669"/>
    <property type="project" value="UniProtKB-KW"/>
</dbReference>
<dbReference type="GO" id="GO:0005840">
    <property type="term" value="C:ribosome"/>
    <property type="evidence" value="ECO:0007669"/>
    <property type="project" value="UniProtKB-KW"/>
</dbReference>
<dbReference type="GO" id="GO:0019843">
    <property type="term" value="F:rRNA binding"/>
    <property type="evidence" value="ECO:0007669"/>
    <property type="project" value="UniProtKB-UniRule"/>
</dbReference>
<dbReference type="GO" id="GO:0003735">
    <property type="term" value="F:structural constituent of ribosome"/>
    <property type="evidence" value="ECO:0007669"/>
    <property type="project" value="InterPro"/>
</dbReference>
<dbReference type="GO" id="GO:0000027">
    <property type="term" value="P:ribosomal large subunit assembly"/>
    <property type="evidence" value="ECO:0007669"/>
    <property type="project" value="UniProtKB-UniRule"/>
</dbReference>
<dbReference type="GO" id="GO:0006412">
    <property type="term" value="P:translation"/>
    <property type="evidence" value="ECO:0007669"/>
    <property type="project" value="InterPro"/>
</dbReference>
<dbReference type="CDD" id="cd07026">
    <property type="entry name" value="Ribosomal_L20"/>
    <property type="match status" value="1"/>
</dbReference>
<dbReference type="FunFam" id="1.10.1900.20:FF:000001">
    <property type="entry name" value="50S ribosomal protein L20"/>
    <property type="match status" value="1"/>
</dbReference>
<dbReference type="Gene3D" id="6.10.160.10">
    <property type="match status" value="1"/>
</dbReference>
<dbReference type="Gene3D" id="1.10.1900.20">
    <property type="entry name" value="Ribosomal protein L20"/>
    <property type="match status" value="1"/>
</dbReference>
<dbReference type="HAMAP" id="MF_00382">
    <property type="entry name" value="Ribosomal_bL20"/>
    <property type="match status" value="1"/>
</dbReference>
<dbReference type="InterPro" id="IPR005813">
    <property type="entry name" value="Ribosomal_bL20"/>
</dbReference>
<dbReference type="InterPro" id="IPR049946">
    <property type="entry name" value="RIBOSOMAL_L20_CS"/>
</dbReference>
<dbReference type="InterPro" id="IPR035566">
    <property type="entry name" value="Ribosomal_protein_bL20_C"/>
</dbReference>
<dbReference type="NCBIfam" id="TIGR01032">
    <property type="entry name" value="rplT_bact"/>
    <property type="match status" value="1"/>
</dbReference>
<dbReference type="PANTHER" id="PTHR10986">
    <property type="entry name" value="39S RIBOSOMAL PROTEIN L20"/>
    <property type="match status" value="1"/>
</dbReference>
<dbReference type="Pfam" id="PF00453">
    <property type="entry name" value="Ribosomal_L20"/>
    <property type="match status" value="1"/>
</dbReference>
<dbReference type="PRINTS" id="PR00062">
    <property type="entry name" value="RIBOSOMALL20"/>
</dbReference>
<dbReference type="SUPFAM" id="SSF74731">
    <property type="entry name" value="Ribosomal protein L20"/>
    <property type="match status" value="1"/>
</dbReference>
<dbReference type="PROSITE" id="PS00937">
    <property type="entry name" value="RIBOSOMAL_L20"/>
    <property type="match status" value="1"/>
</dbReference>